<keyword id="KW-0687">Ribonucleoprotein</keyword>
<keyword id="KW-0689">Ribosomal protein</keyword>
<keyword id="KW-0694">RNA-binding</keyword>
<keyword id="KW-0699">rRNA-binding</keyword>
<organism>
    <name type="scientific">Rickettsia bellii (strain RML369-C)</name>
    <dbReference type="NCBI Taxonomy" id="336407"/>
    <lineage>
        <taxon>Bacteria</taxon>
        <taxon>Pseudomonadati</taxon>
        <taxon>Pseudomonadota</taxon>
        <taxon>Alphaproteobacteria</taxon>
        <taxon>Rickettsiales</taxon>
        <taxon>Rickettsiaceae</taxon>
        <taxon>Rickettsieae</taxon>
        <taxon>Rickettsia</taxon>
        <taxon>belli group</taxon>
    </lineage>
</organism>
<protein>
    <recommendedName>
        <fullName evidence="1">Small ribosomal subunit protein uS11</fullName>
    </recommendedName>
    <alternativeName>
        <fullName evidence="2">30S ribosomal protein S11</fullName>
    </alternativeName>
</protein>
<dbReference type="EMBL" id="CP000087">
    <property type="protein sequence ID" value="ABE05120.1"/>
    <property type="molecule type" value="Genomic_DNA"/>
</dbReference>
<dbReference type="RefSeq" id="WP_011477698.1">
    <property type="nucleotide sequence ID" value="NC_007940.1"/>
</dbReference>
<dbReference type="SMR" id="Q1RHP4"/>
<dbReference type="KEGG" id="rbe:RBE_1039"/>
<dbReference type="eggNOG" id="COG0100">
    <property type="taxonomic scope" value="Bacteria"/>
</dbReference>
<dbReference type="HOGENOM" id="CLU_072439_5_0_5"/>
<dbReference type="OrthoDB" id="9806415at2"/>
<dbReference type="Proteomes" id="UP000001951">
    <property type="component" value="Chromosome"/>
</dbReference>
<dbReference type="GO" id="GO:1990904">
    <property type="term" value="C:ribonucleoprotein complex"/>
    <property type="evidence" value="ECO:0007669"/>
    <property type="project" value="UniProtKB-KW"/>
</dbReference>
<dbReference type="GO" id="GO:0005840">
    <property type="term" value="C:ribosome"/>
    <property type="evidence" value="ECO:0007669"/>
    <property type="project" value="UniProtKB-KW"/>
</dbReference>
<dbReference type="GO" id="GO:0019843">
    <property type="term" value="F:rRNA binding"/>
    <property type="evidence" value="ECO:0007669"/>
    <property type="project" value="UniProtKB-UniRule"/>
</dbReference>
<dbReference type="GO" id="GO:0003735">
    <property type="term" value="F:structural constituent of ribosome"/>
    <property type="evidence" value="ECO:0007669"/>
    <property type="project" value="InterPro"/>
</dbReference>
<dbReference type="GO" id="GO:0006412">
    <property type="term" value="P:translation"/>
    <property type="evidence" value="ECO:0007669"/>
    <property type="project" value="UniProtKB-UniRule"/>
</dbReference>
<dbReference type="Gene3D" id="3.30.420.80">
    <property type="entry name" value="Ribosomal protein S11"/>
    <property type="match status" value="1"/>
</dbReference>
<dbReference type="HAMAP" id="MF_01310">
    <property type="entry name" value="Ribosomal_uS11"/>
    <property type="match status" value="1"/>
</dbReference>
<dbReference type="InterPro" id="IPR001971">
    <property type="entry name" value="Ribosomal_uS11"/>
</dbReference>
<dbReference type="InterPro" id="IPR019981">
    <property type="entry name" value="Ribosomal_uS11_bac-type"/>
</dbReference>
<dbReference type="InterPro" id="IPR018102">
    <property type="entry name" value="Ribosomal_uS11_CS"/>
</dbReference>
<dbReference type="InterPro" id="IPR036967">
    <property type="entry name" value="Ribosomal_uS11_sf"/>
</dbReference>
<dbReference type="NCBIfam" id="NF003698">
    <property type="entry name" value="PRK05309.1"/>
    <property type="match status" value="1"/>
</dbReference>
<dbReference type="NCBIfam" id="TIGR03632">
    <property type="entry name" value="uS11_bact"/>
    <property type="match status" value="1"/>
</dbReference>
<dbReference type="PANTHER" id="PTHR11759">
    <property type="entry name" value="40S RIBOSOMAL PROTEIN S14/30S RIBOSOMAL PROTEIN S11"/>
    <property type="match status" value="1"/>
</dbReference>
<dbReference type="Pfam" id="PF00411">
    <property type="entry name" value="Ribosomal_S11"/>
    <property type="match status" value="1"/>
</dbReference>
<dbReference type="PIRSF" id="PIRSF002131">
    <property type="entry name" value="Ribosomal_S11"/>
    <property type="match status" value="1"/>
</dbReference>
<dbReference type="SUPFAM" id="SSF53137">
    <property type="entry name" value="Translational machinery components"/>
    <property type="match status" value="1"/>
</dbReference>
<dbReference type="PROSITE" id="PS00054">
    <property type="entry name" value="RIBOSOMAL_S11"/>
    <property type="match status" value="1"/>
</dbReference>
<sequence length="127" mass="13487">MNQTVKAKKKKKTITLGVVHIRASFNNTIVTFTDVQGNAISSASAGANGFKGAKKATPYAAQITIDKAAEKAKEYGLKTISIRIGGPGAQRESAMRALFGQNFVVTSILDVSSIAHNGVKAPKRRRV</sequence>
<proteinExistence type="inferred from homology"/>
<comment type="function">
    <text evidence="1">Located on the platform of the 30S subunit, it bridges several disparate RNA helices of the 16S rRNA. Forms part of the Shine-Dalgarno cleft in the 70S ribosome.</text>
</comment>
<comment type="subunit">
    <text evidence="1">Part of the 30S ribosomal subunit. Interacts with proteins S7 and S18. Binds to IF-3.</text>
</comment>
<comment type="similarity">
    <text evidence="1">Belongs to the universal ribosomal protein uS11 family.</text>
</comment>
<name>RS11_RICBR</name>
<reference key="1">
    <citation type="journal article" date="2006" name="PLoS Genet.">
        <title>Genome sequence of Rickettsia bellii illuminates the role of amoebae in gene exchanges between intracellular pathogens.</title>
        <authorList>
            <person name="Ogata H."/>
            <person name="La Scola B."/>
            <person name="Audic S."/>
            <person name="Renesto P."/>
            <person name="Blanc G."/>
            <person name="Robert C."/>
            <person name="Fournier P.-E."/>
            <person name="Claverie J.-M."/>
            <person name="Raoult D."/>
        </authorList>
    </citation>
    <scope>NUCLEOTIDE SEQUENCE [LARGE SCALE GENOMIC DNA]</scope>
    <source>
        <strain>RML369-C</strain>
    </source>
</reference>
<evidence type="ECO:0000255" key="1">
    <source>
        <dbReference type="HAMAP-Rule" id="MF_01310"/>
    </source>
</evidence>
<evidence type="ECO:0000305" key="2"/>
<accession>Q1RHP4</accession>
<feature type="chain" id="PRO_0000277892" description="Small ribosomal subunit protein uS11">
    <location>
        <begin position="1"/>
        <end position="127"/>
    </location>
</feature>
<gene>
    <name evidence="1" type="primary">rpsK</name>
    <name type="ordered locus">RBE_1039</name>
</gene>